<accession>P07943</accession>
<gene>
    <name type="primary">Akr1b1</name>
    <name type="synonym">Akr1b4</name>
    <name type="synonym">Aldr1</name>
</gene>
<keyword id="KW-0007">Acetylation</keyword>
<keyword id="KW-0963">Cytoplasm</keyword>
<keyword id="KW-0903">Direct protein sequencing</keyword>
<keyword id="KW-0443">Lipid metabolism</keyword>
<keyword id="KW-0521">NADP</keyword>
<keyword id="KW-0560">Oxidoreductase</keyword>
<keyword id="KW-0597">Phosphoprotein</keyword>
<keyword id="KW-1185">Reference proteome</keyword>
<name>ALDR_RAT</name>
<dbReference type="EC" id="1.1.1.21" evidence="2"/>
<dbReference type="EC" id="1.1.1.300" evidence="2"/>
<dbReference type="EC" id="1.1.1.372" evidence="2"/>
<dbReference type="EC" id="1.1.1.54" evidence="2"/>
<dbReference type="EMBL" id="X05884">
    <property type="protein sequence ID" value="CAA29308.1"/>
    <property type="molecule type" value="mRNA"/>
</dbReference>
<dbReference type="EMBL" id="M60322">
    <property type="protein sequence ID" value="AAA40721.1"/>
    <property type="molecule type" value="Genomic_DNA"/>
</dbReference>
<dbReference type="EMBL" id="BC062034">
    <property type="protein sequence ID" value="AAH62034.1"/>
    <property type="molecule type" value="mRNA"/>
</dbReference>
<dbReference type="PIR" id="A60603">
    <property type="entry name" value="A60603"/>
</dbReference>
<dbReference type="RefSeq" id="NP_036630.1">
    <property type="nucleotide sequence ID" value="NM_012498.1"/>
</dbReference>
<dbReference type="SMR" id="P07943"/>
<dbReference type="BioGRID" id="246382">
    <property type="interactions" value="2"/>
</dbReference>
<dbReference type="FunCoup" id="P07943">
    <property type="interactions" value="1931"/>
</dbReference>
<dbReference type="STRING" id="10116.ENSRNOP00000012879"/>
<dbReference type="BindingDB" id="P07943"/>
<dbReference type="ChEMBL" id="CHEMBL2622"/>
<dbReference type="DrugCentral" id="P07943"/>
<dbReference type="GlyGen" id="P07943">
    <property type="glycosylation" value="1 site"/>
</dbReference>
<dbReference type="iPTMnet" id="P07943"/>
<dbReference type="PhosphoSitePlus" id="P07943"/>
<dbReference type="SwissPalm" id="P07943"/>
<dbReference type="jPOST" id="P07943"/>
<dbReference type="PaxDb" id="10116-ENSRNOP00000012879"/>
<dbReference type="GeneID" id="24192"/>
<dbReference type="KEGG" id="rno:24192"/>
<dbReference type="UCSC" id="RGD:2092">
    <property type="organism name" value="rat"/>
</dbReference>
<dbReference type="AGR" id="RGD:2092"/>
<dbReference type="CTD" id="231"/>
<dbReference type="RGD" id="2092">
    <property type="gene designation" value="Akr1b1"/>
</dbReference>
<dbReference type="VEuPathDB" id="HostDB:ENSRNOG00000009513"/>
<dbReference type="eggNOG" id="KOG1577">
    <property type="taxonomic scope" value="Eukaryota"/>
</dbReference>
<dbReference type="HOGENOM" id="CLU_023205_0_0_1"/>
<dbReference type="InParanoid" id="P07943"/>
<dbReference type="OrthoDB" id="14754at9989"/>
<dbReference type="PhylomeDB" id="P07943"/>
<dbReference type="TreeFam" id="TF106492"/>
<dbReference type="BRENDA" id="1.1.1.2">
    <property type="organism ID" value="5301"/>
</dbReference>
<dbReference type="BRENDA" id="1.1.1.21">
    <property type="organism ID" value="5301"/>
</dbReference>
<dbReference type="Reactome" id="R-RNO-196108">
    <property type="pathway name" value="Pregnenolone biosynthesis"/>
</dbReference>
<dbReference type="Reactome" id="R-RNO-5652227">
    <property type="pathway name" value="Fructose biosynthesis"/>
</dbReference>
<dbReference type="SABIO-RK" id="P07943"/>
<dbReference type="PRO" id="PR:P07943"/>
<dbReference type="Proteomes" id="UP000002494">
    <property type="component" value="Chromosome 4"/>
</dbReference>
<dbReference type="Bgee" id="ENSRNOG00000009513">
    <property type="expression patterns" value="Expressed in ovary and 19 other cell types or tissues"/>
</dbReference>
<dbReference type="GO" id="GO:0005829">
    <property type="term" value="C:cytosol"/>
    <property type="evidence" value="ECO:0000266"/>
    <property type="project" value="RGD"/>
</dbReference>
<dbReference type="GO" id="GO:0005615">
    <property type="term" value="C:extracellular space"/>
    <property type="evidence" value="ECO:0000314"/>
    <property type="project" value="RGD"/>
</dbReference>
<dbReference type="GO" id="GO:0042629">
    <property type="term" value="C:mast cell granule"/>
    <property type="evidence" value="ECO:0000314"/>
    <property type="project" value="RGD"/>
</dbReference>
<dbReference type="GO" id="GO:0033010">
    <property type="term" value="C:paranodal junction"/>
    <property type="evidence" value="ECO:0000314"/>
    <property type="project" value="RGD"/>
</dbReference>
<dbReference type="GO" id="GO:0048471">
    <property type="term" value="C:perinuclear region of cytoplasm"/>
    <property type="evidence" value="ECO:0000314"/>
    <property type="project" value="RGD"/>
</dbReference>
<dbReference type="GO" id="GO:0032838">
    <property type="term" value="C:plasma membrane bounded cell projection cytoplasm"/>
    <property type="evidence" value="ECO:0000314"/>
    <property type="project" value="RGD"/>
</dbReference>
<dbReference type="GO" id="GO:0043220">
    <property type="term" value="C:Schmidt-Lanterman incisure"/>
    <property type="evidence" value="ECO:0000314"/>
    <property type="project" value="RGD"/>
</dbReference>
<dbReference type="GO" id="GO:0097454">
    <property type="term" value="C:Schwann cell microvillus"/>
    <property type="evidence" value="ECO:0000314"/>
    <property type="project" value="RGD"/>
</dbReference>
<dbReference type="GO" id="GO:0004032">
    <property type="term" value="F:aldose reductase (NADPH) activity"/>
    <property type="evidence" value="ECO:0000314"/>
    <property type="project" value="RGD"/>
</dbReference>
<dbReference type="GO" id="GO:0052650">
    <property type="term" value="F:all-trans-retinol dehydrogenase (NADP+) activity"/>
    <property type="evidence" value="ECO:0007669"/>
    <property type="project" value="UniProtKB-EC"/>
</dbReference>
<dbReference type="GO" id="GO:0047655">
    <property type="term" value="F:allyl-alcohol dehydrogenase activity"/>
    <property type="evidence" value="ECO:0007669"/>
    <property type="project" value="UniProtKB-EC"/>
</dbReference>
<dbReference type="GO" id="GO:0018505">
    <property type="term" value="F:cis-1,2-dihydro-1,2-dihydroxynaphthalene dehydrogenase activity"/>
    <property type="evidence" value="ECO:0000314"/>
    <property type="project" value="RGD"/>
</dbReference>
<dbReference type="GO" id="GO:0043795">
    <property type="term" value="F:glyceraldehyde oxidoreductase activity"/>
    <property type="evidence" value="ECO:0000266"/>
    <property type="project" value="RGD"/>
</dbReference>
<dbReference type="GO" id="GO:0047956">
    <property type="term" value="F:glycerol dehydrogenase (NADP+) activity"/>
    <property type="evidence" value="ECO:0007669"/>
    <property type="project" value="RHEA"/>
</dbReference>
<dbReference type="GO" id="GO:0047939">
    <property type="term" value="F:L-glucuronate reductase activity"/>
    <property type="evidence" value="ECO:0000266"/>
    <property type="project" value="RGD"/>
</dbReference>
<dbReference type="GO" id="GO:0036130">
    <property type="term" value="F:prostaglandin H2 endoperoxidase reductase activity"/>
    <property type="evidence" value="ECO:0007669"/>
    <property type="project" value="RHEA"/>
</dbReference>
<dbReference type="GO" id="GO:0001758">
    <property type="term" value="F:retinal dehydrogenase activity"/>
    <property type="evidence" value="ECO:0000250"/>
    <property type="project" value="UniProtKB"/>
</dbReference>
<dbReference type="GO" id="GO:0071475">
    <property type="term" value="P:cellular hyperosmotic salinity response"/>
    <property type="evidence" value="ECO:0000266"/>
    <property type="project" value="RGD"/>
</dbReference>
<dbReference type="GO" id="GO:0097238">
    <property type="term" value="P:cellular response to methylglyoxal"/>
    <property type="evidence" value="ECO:0000314"/>
    <property type="project" value="RGD"/>
</dbReference>
<dbReference type="GO" id="GO:1901653">
    <property type="term" value="P:cellular response to peptide"/>
    <property type="evidence" value="ECO:0000270"/>
    <property type="project" value="RGD"/>
</dbReference>
<dbReference type="GO" id="GO:0044597">
    <property type="term" value="P:daunorubicin metabolic process"/>
    <property type="evidence" value="ECO:0000266"/>
    <property type="project" value="RGD"/>
</dbReference>
<dbReference type="GO" id="GO:0044598">
    <property type="term" value="P:doxorubicin metabolic process"/>
    <property type="evidence" value="ECO:0000266"/>
    <property type="project" value="RGD"/>
</dbReference>
<dbReference type="GO" id="GO:0002070">
    <property type="term" value="P:epithelial cell maturation"/>
    <property type="evidence" value="ECO:0000266"/>
    <property type="project" value="RGD"/>
</dbReference>
<dbReference type="GO" id="GO:0046370">
    <property type="term" value="P:fructose biosynthetic process"/>
    <property type="evidence" value="ECO:0000266"/>
    <property type="project" value="RGD"/>
</dbReference>
<dbReference type="GO" id="GO:0072061">
    <property type="term" value="P:inner medullary collecting duct development"/>
    <property type="evidence" value="ECO:0000314"/>
    <property type="project" value="RGD"/>
</dbReference>
<dbReference type="GO" id="GO:0019853">
    <property type="term" value="P:L-ascorbic acid biosynthetic process"/>
    <property type="evidence" value="ECO:0000266"/>
    <property type="project" value="RGD"/>
</dbReference>
<dbReference type="GO" id="GO:0060135">
    <property type="term" value="P:maternal process involved in female pregnancy"/>
    <property type="evidence" value="ECO:0000270"/>
    <property type="project" value="RGD"/>
</dbReference>
<dbReference type="GO" id="GO:0072205">
    <property type="term" value="P:metanephric collecting duct development"/>
    <property type="evidence" value="ECO:0000266"/>
    <property type="project" value="RGD"/>
</dbReference>
<dbReference type="GO" id="GO:0005996">
    <property type="term" value="P:monosaccharide metabolic process"/>
    <property type="evidence" value="ECO:0000314"/>
    <property type="project" value="RGD"/>
</dbReference>
<dbReference type="GO" id="GO:0043066">
    <property type="term" value="P:negative regulation of apoptotic process"/>
    <property type="evidence" value="ECO:0000266"/>
    <property type="project" value="RGD"/>
</dbReference>
<dbReference type="GO" id="GO:0042415">
    <property type="term" value="P:norepinephrine metabolic process"/>
    <property type="evidence" value="ECO:0000314"/>
    <property type="project" value="RGD"/>
</dbReference>
<dbReference type="GO" id="GO:0046427">
    <property type="term" value="P:positive regulation of receptor signaling pathway via JAK-STAT"/>
    <property type="evidence" value="ECO:0000315"/>
    <property type="project" value="RGD"/>
</dbReference>
<dbReference type="GO" id="GO:0048661">
    <property type="term" value="P:positive regulation of smooth muscle cell proliferation"/>
    <property type="evidence" value="ECO:0000315"/>
    <property type="project" value="RGD"/>
</dbReference>
<dbReference type="GO" id="GO:0035809">
    <property type="term" value="P:regulation of urine volume"/>
    <property type="evidence" value="ECO:0000266"/>
    <property type="project" value="RGD"/>
</dbReference>
<dbReference type="GO" id="GO:0003091">
    <property type="term" value="P:renal water homeostasis"/>
    <property type="evidence" value="ECO:0000266"/>
    <property type="project" value="RGD"/>
</dbReference>
<dbReference type="GO" id="GO:0097066">
    <property type="term" value="P:response to thyroid hormone"/>
    <property type="evidence" value="ECO:0000270"/>
    <property type="project" value="RGD"/>
</dbReference>
<dbReference type="GO" id="GO:0001523">
    <property type="term" value="P:retinoid metabolic process"/>
    <property type="evidence" value="ECO:0000250"/>
    <property type="project" value="UniProtKB"/>
</dbReference>
<dbReference type="GO" id="GO:0006061">
    <property type="term" value="P:sorbitol biosynthetic process"/>
    <property type="evidence" value="ECO:0000315"/>
    <property type="project" value="RGD"/>
</dbReference>
<dbReference type="GO" id="GO:0031098">
    <property type="term" value="P:stress-activated protein kinase signaling cascade"/>
    <property type="evidence" value="ECO:0000315"/>
    <property type="project" value="RGD"/>
</dbReference>
<dbReference type="GO" id="GO:0001894">
    <property type="term" value="P:tissue homeostasis"/>
    <property type="evidence" value="ECO:0000315"/>
    <property type="project" value="RGD"/>
</dbReference>
<dbReference type="CDD" id="cd19107">
    <property type="entry name" value="AKR_AKR1B1-19"/>
    <property type="match status" value="1"/>
</dbReference>
<dbReference type="FunFam" id="3.20.20.100:FF:000009">
    <property type="entry name" value="Aldo-keto reductase family 1 member B1"/>
    <property type="match status" value="1"/>
</dbReference>
<dbReference type="Gene3D" id="3.20.20.100">
    <property type="entry name" value="NADP-dependent oxidoreductase domain"/>
    <property type="match status" value="1"/>
</dbReference>
<dbReference type="InterPro" id="IPR020471">
    <property type="entry name" value="AKR"/>
</dbReference>
<dbReference type="InterPro" id="IPR018170">
    <property type="entry name" value="Aldo/ket_reductase_CS"/>
</dbReference>
<dbReference type="InterPro" id="IPR023210">
    <property type="entry name" value="NADP_OxRdtase_dom"/>
</dbReference>
<dbReference type="InterPro" id="IPR036812">
    <property type="entry name" value="NADP_OxRdtase_dom_sf"/>
</dbReference>
<dbReference type="PANTHER" id="PTHR11732">
    <property type="entry name" value="ALDO/KETO REDUCTASE"/>
    <property type="match status" value="1"/>
</dbReference>
<dbReference type="Pfam" id="PF00248">
    <property type="entry name" value="Aldo_ket_red"/>
    <property type="match status" value="1"/>
</dbReference>
<dbReference type="PIRSF" id="PIRSF000097">
    <property type="entry name" value="AKR"/>
    <property type="match status" value="1"/>
</dbReference>
<dbReference type="PRINTS" id="PR00069">
    <property type="entry name" value="ALDKETRDTASE"/>
</dbReference>
<dbReference type="SUPFAM" id="SSF51430">
    <property type="entry name" value="NAD(P)-linked oxidoreductase"/>
    <property type="match status" value="1"/>
</dbReference>
<dbReference type="PROSITE" id="PS00798">
    <property type="entry name" value="ALDOKETO_REDUCTASE_1"/>
    <property type="match status" value="1"/>
</dbReference>
<dbReference type="PROSITE" id="PS00062">
    <property type="entry name" value="ALDOKETO_REDUCTASE_2"/>
    <property type="match status" value="1"/>
</dbReference>
<dbReference type="PROSITE" id="PS00063">
    <property type="entry name" value="ALDOKETO_REDUCTASE_3"/>
    <property type="match status" value="1"/>
</dbReference>
<organism>
    <name type="scientific">Rattus norvegicus</name>
    <name type="common">Rat</name>
    <dbReference type="NCBI Taxonomy" id="10116"/>
    <lineage>
        <taxon>Eukaryota</taxon>
        <taxon>Metazoa</taxon>
        <taxon>Chordata</taxon>
        <taxon>Craniata</taxon>
        <taxon>Vertebrata</taxon>
        <taxon>Euteleostomi</taxon>
        <taxon>Mammalia</taxon>
        <taxon>Eutheria</taxon>
        <taxon>Euarchontoglires</taxon>
        <taxon>Glires</taxon>
        <taxon>Rodentia</taxon>
        <taxon>Myomorpha</taxon>
        <taxon>Muroidea</taxon>
        <taxon>Muridae</taxon>
        <taxon>Murinae</taxon>
        <taxon>Rattus</taxon>
    </lineage>
</organism>
<comment type="function">
    <text>Catalyzes the NADPH-dependent reduction of a wide variety of carbonyl-containing compounds to their corresponding alcohols with a broad range of catalytic efficiencies.</text>
</comment>
<comment type="function">
    <text evidence="2">Catalyzes the NADPH-dependent reduction of a wide variety of carbonyl-containing compounds to their corresponding alcohols. Displays enzymatic activity towards endogenous metabolites such as aromatic and aliphatic aldehydes, ketones, monosacharides, bile acids and xenobiotics substrates. Key enzyme in the polyol pathway, catalyzes reduction of glucose to sorbitol during hyperglycemia. Reduces steroids and their derivatives and prostaglandins. Displays low enzymatic activity toward all-trans-retinal, 9-cis-retinal, and 13-cis-retinal. Catalyzes the reduction of diverse phospholipid aldehydes such as 1-palmitoyl-2-(5-oxovaleroyl)-sn -glycero-3-phosphoethanolamin (POVPC) and related phospholipid aldehydes that are generated from the oxydation of phosphotidylcholine and phosphatdyleethanolamides. Plays a role in detoxifying dietary and lipid-derived unsaturated carbonyls, such as crotonaldehyde, 4-hydroxynonenal, trans-2-hexenal, trans-2,4-hexadienal and their glutathione-conjugates carbonyls (GS-carbonyls).</text>
</comment>
<comment type="catalytic activity">
    <reaction evidence="2">
        <text>an alditol + NADP(+) = an aldose + NADPH + H(+)</text>
        <dbReference type="Rhea" id="RHEA:12789"/>
        <dbReference type="Rhea" id="RHEA-COMP:9554"/>
        <dbReference type="Rhea" id="RHEA-COMP:9555"/>
        <dbReference type="ChEBI" id="CHEBI:15378"/>
        <dbReference type="ChEBI" id="CHEBI:15693"/>
        <dbReference type="ChEBI" id="CHEBI:17522"/>
        <dbReference type="ChEBI" id="CHEBI:57783"/>
        <dbReference type="ChEBI" id="CHEBI:58349"/>
        <dbReference type="EC" id="1.1.1.21"/>
    </reaction>
</comment>
<comment type="catalytic activity">
    <reaction evidence="2">
        <text>all-trans-retinol + NADP(+) = all-trans-retinal + NADPH + H(+)</text>
        <dbReference type="Rhea" id="RHEA:25033"/>
        <dbReference type="ChEBI" id="CHEBI:15378"/>
        <dbReference type="ChEBI" id="CHEBI:17336"/>
        <dbReference type="ChEBI" id="CHEBI:17898"/>
        <dbReference type="ChEBI" id="CHEBI:57783"/>
        <dbReference type="ChEBI" id="CHEBI:58349"/>
        <dbReference type="EC" id="1.1.1.300"/>
    </reaction>
</comment>
<comment type="catalytic activity">
    <reaction evidence="2">
        <text>9-cis-retinol + NADP(+) = 9-cis-retinal + NADPH + H(+)</text>
        <dbReference type="Rhea" id="RHEA:54916"/>
        <dbReference type="ChEBI" id="CHEBI:15378"/>
        <dbReference type="ChEBI" id="CHEBI:57783"/>
        <dbReference type="ChEBI" id="CHEBI:58349"/>
        <dbReference type="ChEBI" id="CHEBI:78272"/>
        <dbReference type="ChEBI" id="CHEBI:78273"/>
    </reaction>
</comment>
<comment type="catalytic activity">
    <reaction evidence="2">
        <text>13-cis-retinol + NADP(+) = 13-cis-retinal + NADPH + H(+)</text>
        <dbReference type="Rhea" id="RHEA:54920"/>
        <dbReference type="ChEBI" id="CHEBI:15378"/>
        <dbReference type="ChEBI" id="CHEBI:45479"/>
        <dbReference type="ChEBI" id="CHEBI:45487"/>
        <dbReference type="ChEBI" id="CHEBI:57783"/>
        <dbReference type="ChEBI" id="CHEBI:58349"/>
    </reaction>
</comment>
<comment type="catalytic activity">
    <reaction evidence="2">
        <text>glycerol + NADP(+) = D-glyceraldehyde + NADPH + H(+)</text>
        <dbReference type="Rhea" id="RHEA:23592"/>
        <dbReference type="ChEBI" id="CHEBI:15378"/>
        <dbReference type="ChEBI" id="CHEBI:17378"/>
        <dbReference type="ChEBI" id="CHEBI:17754"/>
        <dbReference type="ChEBI" id="CHEBI:57783"/>
        <dbReference type="ChEBI" id="CHEBI:58349"/>
        <dbReference type="EC" id="1.1.1.372"/>
    </reaction>
</comment>
<comment type="catalytic activity">
    <reaction evidence="2">
        <text>glycerol + NADP(+) = L-glyceraldehyde + NADPH + H(+)</text>
        <dbReference type="Rhea" id="RHEA:38111"/>
        <dbReference type="ChEBI" id="CHEBI:15378"/>
        <dbReference type="ChEBI" id="CHEBI:17754"/>
        <dbReference type="ChEBI" id="CHEBI:27975"/>
        <dbReference type="ChEBI" id="CHEBI:57783"/>
        <dbReference type="ChEBI" id="CHEBI:58349"/>
        <dbReference type="EC" id="1.1.1.372"/>
    </reaction>
</comment>
<comment type="catalytic activity">
    <reaction evidence="2">
        <text>prenol + NADP(+) = 3-methyl-2-butenal + NADPH + H(+)</text>
        <dbReference type="Rhea" id="RHEA:58420"/>
        <dbReference type="ChEBI" id="CHEBI:15378"/>
        <dbReference type="ChEBI" id="CHEBI:15825"/>
        <dbReference type="ChEBI" id="CHEBI:16019"/>
        <dbReference type="ChEBI" id="CHEBI:57783"/>
        <dbReference type="ChEBI" id="CHEBI:58349"/>
    </reaction>
</comment>
<comment type="catalytic activity">
    <reaction evidence="2">
        <text>(E)-hex-2-en-1-ol + NADP(+) = (E)-hex-2-enal + NADPH + H(+)</text>
        <dbReference type="Rhea" id="RHEA:58424"/>
        <dbReference type="ChEBI" id="CHEBI:15378"/>
        <dbReference type="ChEBI" id="CHEBI:28913"/>
        <dbReference type="ChEBI" id="CHEBI:57783"/>
        <dbReference type="ChEBI" id="CHEBI:58349"/>
        <dbReference type="ChEBI" id="CHEBI:141205"/>
    </reaction>
</comment>
<comment type="catalytic activity">
    <reaction evidence="2">
        <text>(E,E)-2,4-hexadien-1-ol + NADP(+) = (E,E)-2,4-hexadienal + NADPH + H(+)</text>
        <dbReference type="Rhea" id="RHEA:58428"/>
        <dbReference type="ChEBI" id="CHEBI:15378"/>
        <dbReference type="ChEBI" id="CHEBI:57783"/>
        <dbReference type="ChEBI" id="CHEBI:58349"/>
        <dbReference type="ChEBI" id="CHEBI:82334"/>
        <dbReference type="ChEBI" id="CHEBI:142625"/>
    </reaction>
</comment>
<comment type="catalytic activity">
    <reaction evidence="2">
        <text>a 4-hydroxynonen-1-ol + NADP(+) = a 4-hydroxynonenal + NADPH + H(+)</text>
        <dbReference type="Rhea" id="RHEA:58336"/>
        <dbReference type="ChEBI" id="CHEBI:15378"/>
        <dbReference type="ChEBI" id="CHEBI:57783"/>
        <dbReference type="ChEBI" id="CHEBI:58349"/>
        <dbReference type="ChEBI" id="CHEBI:142593"/>
        <dbReference type="ChEBI" id="CHEBI:142606"/>
    </reaction>
</comment>
<comment type="catalytic activity">
    <reaction evidence="2">
        <text>prostaglandin F2alpha + NADP(+) = prostaglandin H2 + NADPH + H(+)</text>
        <dbReference type="Rhea" id="RHEA:45312"/>
        <dbReference type="ChEBI" id="CHEBI:15378"/>
        <dbReference type="ChEBI" id="CHEBI:57404"/>
        <dbReference type="ChEBI" id="CHEBI:57405"/>
        <dbReference type="ChEBI" id="CHEBI:57783"/>
        <dbReference type="ChEBI" id="CHEBI:58349"/>
    </reaction>
</comment>
<comment type="catalytic activity">
    <reaction evidence="2">
        <text>allyl alcohol + NADP(+) = acrolein + NADPH + H(+)</text>
        <dbReference type="Rhea" id="RHEA:12168"/>
        <dbReference type="ChEBI" id="CHEBI:15368"/>
        <dbReference type="ChEBI" id="CHEBI:15378"/>
        <dbReference type="ChEBI" id="CHEBI:16605"/>
        <dbReference type="ChEBI" id="CHEBI:57783"/>
        <dbReference type="ChEBI" id="CHEBI:58349"/>
        <dbReference type="EC" id="1.1.1.54"/>
    </reaction>
</comment>
<comment type="catalytic activity">
    <reaction evidence="2">
        <text>pyridine 3-methanol + NADP(+) = pyridine-3-carbaldehyde + NADPH + H(+)</text>
        <dbReference type="Rhea" id="RHEA:58776"/>
        <dbReference type="ChEBI" id="CHEBI:15378"/>
        <dbReference type="ChEBI" id="CHEBI:28345"/>
        <dbReference type="ChEBI" id="CHEBI:45213"/>
        <dbReference type="ChEBI" id="CHEBI:57783"/>
        <dbReference type="ChEBI" id="CHEBI:58349"/>
    </reaction>
</comment>
<comment type="catalytic activity">
    <reaction evidence="2">
        <text>1-hexadecanoyl-2-(5-oxopentanoyl)-sn-glycero-3-phosphocholine + NADPH + H(+) = 1-hexadecanoyl-2-(5-hydroxypentanoyl)-sn-glycero-3-phosphocholine + NADP(+)</text>
        <dbReference type="Rhea" id="RHEA:58512"/>
        <dbReference type="ChEBI" id="CHEBI:15378"/>
        <dbReference type="ChEBI" id="CHEBI:57783"/>
        <dbReference type="ChEBI" id="CHEBI:58349"/>
        <dbReference type="ChEBI" id="CHEBI:77890"/>
        <dbReference type="ChEBI" id="CHEBI:142747"/>
    </reaction>
</comment>
<comment type="catalytic activity">
    <reaction evidence="2">
        <text>1-hexadecanoyl-2-(7-oxoheptanoyl)-sn-glycero-3-phosphocholine + NADPH + H(+) = 1-hexadecanoyl-2-(7-hydroxyheptanoyl)-sn-glycero-3-phosphocholine + NADP(+)</text>
        <dbReference type="Rhea" id="RHEA:58752"/>
        <dbReference type="ChEBI" id="CHEBI:15378"/>
        <dbReference type="ChEBI" id="CHEBI:57783"/>
        <dbReference type="ChEBI" id="CHEBI:58349"/>
        <dbReference type="ChEBI" id="CHEBI:134601"/>
        <dbReference type="ChEBI" id="CHEBI:142748"/>
    </reaction>
</comment>
<comment type="catalytic activity">
    <reaction evidence="2">
        <text>1-hexadecanoyl-2-(9-oxononanoyl)-sn-glycero-3-phosphocholine + NADPH + H(+) = 1-hexadecanoyl-2-(9-hydroxynonanoyl)-sn-glycero-3-phosphocholine + NADP(+)</text>
        <dbReference type="Rhea" id="RHEA:58592"/>
        <dbReference type="ChEBI" id="CHEBI:15378"/>
        <dbReference type="ChEBI" id="CHEBI:57783"/>
        <dbReference type="ChEBI" id="CHEBI:58349"/>
        <dbReference type="ChEBI" id="CHEBI:61042"/>
        <dbReference type="ChEBI" id="CHEBI:142749"/>
    </reaction>
</comment>
<comment type="catalytic activity">
    <reaction evidence="2">
        <text>1-hexadecanoyl-2-(5-oxopentanoyl)-sn-glycero-3-phosphoethanolamine + NADPH + H(+) = 1-hexadecanoyl-2-(5-hydroxypentanoyl)-sn-glycero-3-phosphoethanolamine + NADP(+)</text>
        <dbReference type="Rhea" id="RHEA:58756"/>
        <dbReference type="ChEBI" id="CHEBI:15378"/>
        <dbReference type="ChEBI" id="CHEBI:57783"/>
        <dbReference type="ChEBI" id="CHEBI:58349"/>
        <dbReference type="ChEBI" id="CHEBI:142750"/>
        <dbReference type="ChEBI" id="CHEBI:142751"/>
    </reaction>
</comment>
<comment type="subunit">
    <text evidence="2">Monomer.</text>
</comment>
<comment type="subcellular location">
    <subcellularLocation>
        <location>Cytoplasm</location>
    </subcellularLocation>
</comment>
<comment type="similarity">
    <text evidence="5">Belongs to the aldo/keto reductase family.</text>
</comment>
<reference key="1">
    <citation type="journal article" date="1987" name="FEBS Lett.">
        <title>Aldose reductase and p-crystallin belong to the same protein superfamily as aldehyde reductase.</title>
        <authorList>
            <person name="Carper D."/>
            <person name="Nishimura C."/>
            <person name="Shinohara T."/>
            <person name="Dietzchold B."/>
            <person name="Wistow G."/>
            <person name="Craft C."/>
            <person name="Kador P."/>
            <person name="Kinoshita J.H."/>
        </authorList>
    </citation>
    <scope>NUCLEOTIDE SEQUENCE</scope>
    <scope>PARTIAL PROTEIN SEQUENCE</scope>
    <source>
        <strain>Sprague-Dawley</strain>
        <tissue>Lens</tissue>
    </source>
</reference>
<reference key="2">
    <citation type="journal article" date="1991" name="Gene">
        <title>Characterization of the aldose reductase-encoding gene family in rat.</title>
        <authorList>
            <person name="Graham C.E."/>
            <person name="Szpirer C."/>
            <person name="Levan G."/>
            <person name="Carper D."/>
        </authorList>
    </citation>
    <scope>NUCLEOTIDE SEQUENCE [GENOMIC DNA]</scope>
</reference>
<reference key="3">
    <citation type="journal article" date="2004" name="Genome Res.">
        <title>The status, quality, and expansion of the NIH full-length cDNA project: the Mammalian Gene Collection (MGC).</title>
        <authorList>
            <consortium name="The MGC Project Team"/>
        </authorList>
    </citation>
    <scope>NUCLEOTIDE SEQUENCE [LARGE SCALE MRNA]</scope>
    <source>
        <tissue>Prostate</tissue>
    </source>
</reference>
<reference key="4">
    <citation type="submission" date="2006-11" db="UniProtKB">
        <authorList>
            <person name="Lubec G."/>
            <person name="Afjehi-Sadat L."/>
        </authorList>
    </citation>
    <scope>PROTEIN SEQUENCE OF 42-53; 156-169; 178-195; 276-294 AND 307-316</scope>
    <scope>IDENTIFICATION BY MASS SPECTROMETRY</scope>
    <source>
        <strain>Sprague-Dawley</strain>
        <tissue>Spinal cord</tissue>
    </source>
</reference>
<reference key="5">
    <citation type="journal article" date="1995" name="Electrophoresis">
        <title>Long-term induction of an aldose reductase protein by basic fibroblast growth factor in rat astrocytes in vitro.</title>
        <authorList>
            <person name="Laeng P."/>
            <person name="Bouillon P."/>
            <person name="Taupenot L."/>
            <person name="Labourdette G."/>
        </authorList>
    </citation>
    <scope>PROTEIN SEQUENCE OF 156-169 AND 205-210</scope>
    <source>
        <tissue>Astrocyte</tissue>
    </source>
</reference>
<reference key="6">
    <citation type="journal article" date="2012" name="Nat. Commun.">
        <title>Quantitative maps of protein phosphorylation sites across 14 different rat organs and tissues.</title>
        <authorList>
            <person name="Lundby A."/>
            <person name="Secher A."/>
            <person name="Lage K."/>
            <person name="Nordsborg N.B."/>
            <person name="Dmytriyev A."/>
            <person name="Lundby C."/>
            <person name="Olsen J.V."/>
        </authorList>
    </citation>
    <scope>PHOSPHORYLATION [LARGE SCALE ANALYSIS] AT SER-3</scope>
    <scope>IDENTIFICATION BY MASS SPECTROMETRY [LARGE SCALE ANALYSIS]</scope>
</reference>
<sequence>MASHLELNNGTKMPTLGLGTWKSPPGQVTEAVKVAIDMGYRHIDCAQVYQNEKEVGVALQEKLKEQVVKRQDLFIVSKLWCTFHDQSMVKGACQKTLSDLQLDYLDLYLIHWPTGFKPGPDYFPLDASGNVIPSDTDFVDTWTAMEQLVDEGLVKAIGVSNFNPLQIERILNKPGLKYKPAVNQIECHPYLTQEKLIEYCHCKGIVVTAYSPLGSPDRPWAKPEDPSLLEDPRIKEIAAKYNKTTAQVLIRFPIQRNLVVIPKSVTPARIAENFKVFDFELSNEDMATLLSYNRNWRVCALMSCAKHKDYPFHAEV</sequence>
<protein>
    <recommendedName>
        <fullName>Aldo-keto reductase family 1 member B1</fullName>
        <ecNumber evidence="2">1.1.1.21</ecNumber>
        <ecNumber evidence="2">1.1.1.300</ecNumber>
        <ecNumber evidence="2">1.1.1.372</ecNumber>
        <ecNumber evidence="2">1.1.1.54</ecNumber>
    </recommendedName>
    <alternativeName>
        <fullName>Aldehyde reductase</fullName>
    </alternativeName>
    <alternativeName>
        <fullName>Aldose reductase</fullName>
        <shortName>AR</shortName>
    </alternativeName>
</protein>
<feature type="initiator methionine" description="Removed" evidence="3">
    <location>
        <position position="1"/>
    </location>
</feature>
<feature type="chain" id="PRO_0000124627" description="Aldo-keto reductase family 1 member B1">
    <location>
        <begin position="2"/>
        <end position="316"/>
    </location>
</feature>
<feature type="active site" description="Proton donor" evidence="2">
    <location>
        <position position="49"/>
    </location>
</feature>
<feature type="binding site" evidence="4">
    <location>
        <begin position="10"/>
        <end position="19"/>
    </location>
    <ligand>
        <name>NADP(+)</name>
        <dbReference type="ChEBI" id="CHEBI:58349"/>
    </ligand>
</feature>
<feature type="binding site" evidence="1">
    <location>
        <position position="111"/>
    </location>
    <ligand>
        <name>substrate</name>
    </ligand>
</feature>
<feature type="binding site" evidence="2">
    <location>
        <begin position="211"/>
        <end position="273"/>
    </location>
    <ligand>
        <name>NADP(+)</name>
        <dbReference type="ChEBI" id="CHEBI:58349"/>
    </ligand>
</feature>
<feature type="site" description="Lowers pKa of active site Tyr" evidence="1">
    <location>
        <position position="78"/>
    </location>
</feature>
<feature type="modified residue" description="N-acetylalanine" evidence="3">
    <location>
        <position position="2"/>
    </location>
</feature>
<feature type="modified residue" description="Phosphoserine" evidence="6">
    <location>
        <position position="3"/>
    </location>
</feature>
<feature type="modified residue" description="N6-acetyllysine" evidence="2">
    <location>
        <position position="95"/>
    </location>
</feature>
<feature type="modified residue" description="N6-acetyllysine" evidence="2">
    <location>
        <position position="222"/>
    </location>
</feature>
<feature type="modified residue" description="N6-acetyllysine" evidence="2">
    <location>
        <position position="263"/>
    </location>
</feature>
<proteinExistence type="evidence at protein level"/>
<evidence type="ECO:0000250" key="1"/>
<evidence type="ECO:0000250" key="2">
    <source>
        <dbReference type="UniProtKB" id="P15121"/>
    </source>
</evidence>
<evidence type="ECO:0000250" key="3">
    <source>
        <dbReference type="UniProtKB" id="P16116"/>
    </source>
</evidence>
<evidence type="ECO:0000255" key="4"/>
<evidence type="ECO:0000305" key="5"/>
<evidence type="ECO:0007744" key="6">
    <source>
    </source>
</evidence>